<reference key="1">
    <citation type="journal article" date="1995" name="DNA Res.">
        <title>Sequence analysis of the genome of the unicellular cyanobacterium Synechocystis sp. strain PCC6803. I. Sequence features in the 1 Mb region from map positions 64% to 92% of the genome.</title>
        <authorList>
            <person name="Kaneko T."/>
            <person name="Tanaka A."/>
            <person name="Sato S."/>
            <person name="Kotani H."/>
            <person name="Sazuka T."/>
            <person name="Miyajima N."/>
            <person name="Sugiura M."/>
            <person name="Tabata S."/>
        </authorList>
    </citation>
    <scope>NUCLEOTIDE SEQUENCE [LARGE SCALE GENOMIC DNA]</scope>
    <source>
        <strain>ATCC 27184 / PCC 6803 / N-1</strain>
    </source>
</reference>
<reference key="2">
    <citation type="journal article" date="1996" name="DNA Res.">
        <title>Sequence analysis of the genome of the unicellular cyanobacterium Synechocystis sp. strain PCC6803. II. Sequence determination of the entire genome and assignment of potential protein-coding regions.</title>
        <authorList>
            <person name="Kaneko T."/>
            <person name="Sato S."/>
            <person name="Kotani H."/>
            <person name="Tanaka A."/>
            <person name="Asamizu E."/>
            <person name="Nakamura Y."/>
            <person name="Miyajima N."/>
            <person name="Hirosawa M."/>
            <person name="Sugiura M."/>
            <person name="Sasamoto S."/>
            <person name="Kimura T."/>
            <person name="Hosouchi T."/>
            <person name="Matsuno A."/>
            <person name="Muraki A."/>
            <person name="Nakazaki N."/>
            <person name="Naruo K."/>
            <person name="Okumura S."/>
            <person name="Shimpo S."/>
            <person name="Takeuchi C."/>
            <person name="Wada T."/>
            <person name="Watanabe A."/>
            <person name="Yamada M."/>
            <person name="Yasuda M."/>
            <person name="Tabata S."/>
        </authorList>
    </citation>
    <scope>NUCLEOTIDE SEQUENCE [LARGE SCALE GENOMIC DNA]</scope>
    <source>
        <strain>ATCC 27184 / PCC 6803 / Kazusa</strain>
    </source>
</reference>
<name>Y846_SYNY3</name>
<evidence type="ECO:0000255" key="1">
    <source>
        <dbReference type="PROSITE-ProRule" id="PRU00540"/>
    </source>
</evidence>
<evidence type="ECO:0000305" key="2"/>
<keyword id="KW-0238">DNA-binding</keyword>
<keyword id="KW-1185">Reference proteome</keyword>
<dbReference type="EMBL" id="BA000022">
    <property type="protein sequence ID" value="BAA10535.1"/>
    <property type="status" value="ALT_INIT"/>
    <property type="molecule type" value="Genomic_DNA"/>
</dbReference>
<dbReference type="SMR" id="Q55433"/>
<dbReference type="FunCoup" id="Q55433">
    <property type="interactions" value="231"/>
</dbReference>
<dbReference type="IntAct" id="Q55433">
    <property type="interactions" value="2"/>
</dbReference>
<dbReference type="STRING" id="1148.gene:10500039"/>
<dbReference type="PaxDb" id="1148-1673323"/>
<dbReference type="EnsemblBacteria" id="BAA10535">
    <property type="protein sequence ID" value="BAA10535"/>
    <property type="gene ID" value="BAA10535"/>
</dbReference>
<dbReference type="KEGG" id="syn:slr0846"/>
<dbReference type="eggNOG" id="COG1959">
    <property type="taxonomic scope" value="Bacteria"/>
</dbReference>
<dbReference type="InParanoid" id="Q55433"/>
<dbReference type="PhylomeDB" id="Q55433"/>
<dbReference type="Proteomes" id="UP000001425">
    <property type="component" value="Chromosome"/>
</dbReference>
<dbReference type="GO" id="GO:0005829">
    <property type="term" value="C:cytosol"/>
    <property type="evidence" value="ECO:0000318"/>
    <property type="project" value="GO_Central"/>
</dbReference>
<dbReference type="GO" id="GO:0003677">
    <property type="term" value="F:DNA binding"/>
    <property type="evidence" value="ECO:0007669"/>
    <property type="project" value="UniProtKB-KW"/>
</dbReference>
<dbReference type="GO" id="GO:0003700">
    <property type="term" value="F:DNA-binding transcription factor activity"/>
    <property type="evidence" value="ECO:0000318"/>
    <property type="project" value="GO_Central"/>
</dbReference>
<dbReference type="GO" id="GO:0006355">
    <property type="term" value="P:regulation of DNA-templated transcription"/>
    <property type="evidence" value="ECO:0000318"/>
    <property type="project" value="GO_Central"/>
</dbReference>
<dbReference type="FunFam" id="1.10.10.10:FF:000026">
    <property type="entry name" value="HTH-type transcriptional regulator IscR"/>
    <property type="match status" value="1"/>
</dbReference>
<dbReference type="Gene3D" id="1.10.10.10">
    <property type="entry name" value="Winged helix-like DNA-binding domain superfamily/Winged helix DNA-binding domain"/>
    <property type="match status" value="1"/>
</dbReference>
<dbReference type="InterPro" id="IPR030489">
    <property type="entry name" value="TR_Rrf2-type_CS"/>
</dbReference>
<dbReference type="InterPro" id="IPR000944">
    <property type="entry name" value="Tscrpt_reg_Rrf2"/>
</dbReference>
<dbReference type="InterPro" id="IPR036388">
    <property type="entry name" value="WH-like_DNA-bd_sf"/>
</dbReference>
<dbReference type="InterPro" id="IPR036390">
    <property type="entry name" value="WH_DNA-bd_sf"/>
</dbReference>
<dbReference type="NCBIfam" id="TIGR00738">
    <property type="entry name" value="rrf2_super"/>
    <property type="match status" value="1"/>
</dbReference>
<dbReference type="PANTHER" id="PTHR33221:SF16">
    <property type="entry name" value="HTH-TYPE TRANSCRIPTIONAL REGULATOR SLR0846-RELATED"/>
    <property type="match status" value="1"/>
</dbReference>
<dbReference type="PANTHER" id="PTHR33221">
    <property type="entry name" value="WINGED HELIX-TURN-HELIX TRANSCRIPTIONAL REGULATOR, RRF2 FAMILY"/>
    <property type="match status" value="1"/>
</dbReference>
<dbReference type="Pfam" id="PF02082">
    <property type="entry name" value="Rrf2"/>
    <property type="match status" value="1"/>
</dbReference>
<dbReference type="SUPFAM" id="SSF46785">
    <property type="entry name" value="Winged helix' DNA-binding domain"/>
    <property type="match status" value="1"/>
</dbReference>
<dbReference type="PROSITE" id="PS01332">
    <property type="entry name" value="HTH_RRF2_1"/>
    <property type="match status" value="1"/>
</dbReference>
<dbReference type="PROSITE" id="PS51197">
    <property type="entry name" value="HTH_RRF2_2"/>
    <property type="match status" value="1"/>
</dbReference>
<protein>
    <recommendedName>
        <fullName>Putative HTH-type transcriptional regulator slr0846</fullName>
    </recommendedName>
</protein>
<organism>
    <name type="scientific">Synechocystis sp. (strain ATCC 27184 / PCC 6803 / Kazusa)</name>
    <dbReference type="NCBI Taxonomy" id="1111708"/>
    <lineage>
        <taxon>Bacteria</taxon>
        <taxon>Bacillati</taxon>
        <taxon>Cyanobacteriota</taxon>
        <taxon>Cyanophyceae</taxon>
        <taxon>Synechococcales</taxon>
        <taxon>Merismopediaceae</taxon>
        <taxon>Synechocystis</taxon>
    </lineage>
</organism>
<sequence>MKLTTKSHYSVKALLDLALQPDYGPASVKAIAERQNIPGPYLEKLLITLRRAGIVNAYRGVRGGYQLAQAPDQISLGQILAALEESLEPFPQYGDDQSLAEDWVTLSVWRQLHQKFVKALYSITLADLYYDARSWQAAQGEGINFIV</sequence>
<gene>
    <name type="ordered locus">slr0846</name>
</gene>
<comment type="sequence caution" evidence="2">
    <conflict type="erroneous initiation">
        <sequence resource="EMBL-CDS" id="BAA10535"/>
    </conflict>
</comment>
<feature type="chain" id="PRO_0000109573" description="Putative HTH-type transcriptional regulator slr0846">
    <location>
        <begin position="1"/>
        <end position="147"/>
    </location>
</feature>
<feature type="domain" description="HTH rrf2-type" evidence="1">
    <location>
        <begin position="2"/>
        <end position="130"/>
    </location>
</feature>
<proteinExistence type="predicted"/>
<accession>Q55433</accession>